<reference key="1">
    <citation type="submission" date="2006-03" db="EMBL/GenBank/DDBJ databases">
        <title>Complete sequence of Rhodopseudomonas palustris BisB5.</title>
        <authorList>
            <consortium name="US DOE Joint Genome Institute"/>
            <person name="Copeland A."/>
            <person name="Lucas S."/>
            <person name="Lapidus A."/>
            <person name="Barry K."/>
            <person name="Detter J.C."/>
            <person name="Glavina del Rio T."/>
            <person name="Hammon N."/>
            <person name="Israni S."/>
            <person name="Dalin E."/>
            <person name="Tice H."/>
            <person name="Pitluck S."/>
            <person name="Chain P."/>
            <person name="Malfatti S."/>
            <person name="Shin M."/>
            <person name="Vergez L."/>
            <person name="Schmutz J."/>
            <person name="Larimer F."/>
            <person name="Land M."/>
            <person name="Hauser L."/>
            <person name="Pelletier D.A."/>
            <person name="Kyrpides N."/>
            <person name="Lykidis A."/>
            <person name="Oda Y."/>
            <person name="Harwood C.S."/>
            <person name="Richardson P."/>
        </authorList>
    </citation>
    <scope>NUCLEOTIDE SEQUENCE [LARGE SCALE GENOMIC DNA]</scope>
    <source>
        <strain>BisB5</strain>
    </source>
</reference>
<name>NUOH1_RHOPS</name>
<evidence type="ECO:0000255" key="1">
    <source>
        <dbReference type="HAMAP-Rule" id="MF_01350"/>
    </source>
</evidence>
<sequence length="319" mass="34005">MIGLIITATISVTLIMVLLVVAGTFTWVERRLLGFVQERLGPNRVGPFGSLQWIADTVKILTKEDRPPPGADKFAYILAPAVAATPVLAGFGVIEFGDGLSLAAVDVGVLFLIGMLGLTAYAVVLGAWASHSRFALMGGMRAAAQMLAYEVFLGLSLMGAVMLAGSLSMNAIVEAQRDVWFVVLQPLGAALFCIAGVAAAHRLPFDLPESENDLVAGFMTEYTGMSFGLFFLGEYLAVLLVSALAVTLFFGGWLGPWLPGPIWFGLKTGVIAVVFVWLRATLPRPRYDQLLSFAWKIALPLSLANLLLTGIVVVARSAS</sequence>
<feature type="chain" id="PRO_0000299949" description="NADH-quinone oxidoreductase subunit H 1">
    <location>
        <begin position="1"/>
        <end position="319"/>
    </location>
</feature>
<feature type="transmembrane region" description="Helical" evidence="1">
    <location>
        <begin position="1"/>
        <end position="21"/>
    </location>
</feature>
<feature type="transmembrane region" description="Helical" evidence="1">
    <location>
        <begin position="74"/>
        <end position="94"/>
    </location>
</feature>
<feature type="transmembrane region" description="Helical" evidence="1">
    <location>
        <begin position="107"/>
        <end position="127"/>
    </location>
</feature>
<feature type="transmembrane region" description="Helical" evidence="1">
    <location>
        <begin position="147"/>
        <end position="167"/>
    </location>
</feature>
<feature type="transmembrane region" description="Helical" evidence="1">
    <location>
        <begin position="179"/>
        <end position="199"/>
    </location>
</feature>
<feature type="transmembrane region" description="Helical" evidence="1">
    <location>
        <begin position="238"/>
        <end position="258"/>
    </location>
</feature>
<feature type="transmembrane region" description="Helical" evidence="1">
    <location>
        <begin position="262"/>
        <end position="282"/>
    </location>
</feature>
<feature type="transmembrane region" description="Helical" evidence="1">
    <location>
        <begin position="293"/>
        <end position="313"/>
    </location>
</feature>
<comment type="function">
    <text evidence="1">NDH-1 shuttles electrons from NADH, via FMN and iron-sulfur (Fe-S) centers, to quinones in the respiratory chain. The immediate electron acceptor for the enzyme in this species is believed to be ubiquinone. Couples the redox reaction to proton translocation (for every two electrons transferred, four hydrogen ions are translocated across the cytoplasmic membrane), and thus conserves the redox energy in a proton gradient. This subunit may bind ubiquinone.</text>
</comment>
<comment type="catalytic activity">
    <reaction evidence="1">
        <text>a quinone + NADH + 5 H(+)(in) = a quinol + NAD(+) + 4 H(+)(out)</text>
        <dbReference type="Rhea" id="RHEA:57888"/>
        <dbReference type="ChEBI" id="CHEBI:15378"/>
        <dbReference type="ChEBI" id="CHEBI:24646"/>
        <dbReference type="ChEBI" id="CHEBI:57540"/>
        <dbReference type="ChEBI" id="CHEBI:57945"/>
        <dbReference type="ChEBI" id="CHEBI:132124"/>
    </reaction>
</comment>
<comment type="subunit">
    <text evidence="1">NDH-1 is composed of 14 different subunits. Subunits NuoA, H, J, K, L, M, N constitute the membrane sector of the complex.</text>
</comment>
<comment type="subcellular location">
    <subcellularLocation>
        <location evidence="1">Cell inner membrane</location>
        <topology evidence="1">Multi-pass membrane protein</topology>
    </subcellularLocation>
</comment>
<comment type="similarity">
    <text evidence="1">Belongs to the complex I subunit 1 family.</text>
</comment>
<keyword id="KW-0997">Cell inner membrane</keyword>
<keyword id="KW-1003">Cell membrane</keyword>
<keyword id="KW-0472">Membrane</keyword>
<keyword id="KW-0520">NAD</keyword>
<keyword id="KW-0874">Quinone</keyword>
<keyword id="KW-1278">Translocase</keyword>
<keyword id="KW-0812">Transmembrane</keyword>
<keyword id="KW-1133">Transmembrane helix</keyword>
<keyword id="KW-0830">Ubiquinone</keyword>
<proteinExistence type="inferred from homology"/>
<dbReference type="EC" id="7.1.1.-" evidence="1"/>
<dbReference type="EMBL" id="CP000283">
    <property type="protein sequence ID" value="ABE38570.1"/>
    <property type="molecule type" value="Genomic_DNA"/>
</dbReference>
<dbReference type="SMR" id="Q13BG9"/>
<dbReference type="STRING" id="316057.RPD_1332"/>
<dbReference type="KEGG" id="rpd:RPD_1332"/>
<dbReference type="eggNOG" id="COG1005">
    <property type="taxonomic scope" value="Bacteria"/>
</dbReference>
<dbReference type="HOGENOM" id="CLU_015134_0_1_5"/>
<dbReference type="BioCyc" id="RPAL316057:RPD_RS06745-MONOMER"/>
<dbReference type="Proteomes" id="UP000001818">
    <property type="component" value="Chromosome"/>
</dbReference>
<dbReference type="GO" id="GO:0005886">
    <property type="term" value="C:plasma membrane"/>
    <property type="evidence" value="ECO:0007669"/>
    <property type="project" value="UniProtKB-SubCell"/>
</dbReference>
<dbReference type="GO" id="GO:0003954">
    <property type="term" value="F:NADH dehydrogenase activity"/>
    <property type="evidence" value="ECO:0007669"/>
    <property type="project" value="TreeGrafter"/>
</dbReference>
<dbReference type="GO" id="GO:0016655">
    <property type="term" value="F:oxidoreductase activity, acting on NAD(P)H, quinone or similar compound as acceptor"/>
    <property type="evidence" value="ECO:0007669"/>
    <property type="project" value="UniProtKB-UniRule"/>
</dbReference>
<dbReference type="GO" id="GO:0048038">
    <property type="term" value="F:quinone binding"/>
    <property type="evidence" value="ECO:0007669"/>
    <property type="project" value="UniProtKB-KW"/>
</dbReference>
<dbReference type="GO" id="GO:0009060">
    <property type="term" value="P:aerobic respiration"/>
    <property type="evidence" value="ECO:0007669"/>
    <property type="project" value="TreeGrafter"/>
</dbReference>
<dbReference type="HAMAP" id="MF_01350">
    <property type="entry name" value="NDH1_NuoH"/>
    <property type="match status" value="1"/>
</dbReference>
<dbReference type="InterPro" id="IPR001694">
    <property type="entry name" value="NADH_UbQ_OxRdtase_su1/FPO"/>
</dbReference>
<dbReference type="InterPro" id="IPR018086">
    <property type="entry name" value="NADH_UbQ_OxRdtase_su1_CS"/>
</dbReference>
<dbReference type="NCBIfam" id="NF004740">
    <property type="entry name" value="PRK06076.1-1"/>
    <property type="match status" value="1"/>
</dbReference>
<dbReference type="NCBIfam" id="NF004741">
    <property type="entry name" value="PRK06076.1-2"/>
    <property type="match status" value="1"/>
</dbReference>
<dbReference type="PANTHER" id="PTHR11432">
    <property type="entry name" value="NADH DEHYDROGENASE SUBUNIT 1"/>
    <property type="match status" value="1"/>
</dbReference>
<dbReference type="PANTHER" id="PTHR11432:SF3">
    <property type="entry name" value="NADH-UBIQUINONE OXIDOREDUCTASE CHAIN 1"/>
    <property type="match status" value="1"/>
</dbReference>
<dbReference type="Pfam" id="PF00146">
    <property type="entry name" value="NADHdh"/>
    <property type="match status" value="1"/>
</dbReference>
<dbReference type="PROSITE" id="PS00668">
    <property type="entry name" value="COMPLEX1_ND1_2"/>
    <property type="match status" value="1"/>
</dbReference>
<accession>Q13BG9</accession>
<gene>
    <name evidence="1" type="primary">nuoH1</name>
    <name type="ordered locus">RPD_1332</name>
</gene>
<protein>
    <recommendedName>
        <fullName evidence="1">NADH-quinone oxidoreductase subunit H 1</fullName>
        <ecNumber evidence="1">7.1.1.-</ecNumber>
    </recommendedName>
    <alternativeName>
        <fullName evidence="1">NADH dehydrogenase I subunit H 1</fullName>
    </alternativeName>
    <alternativeName>
        <fullName evidence="1">NDH-1 subunit H 1</fullName>
    </alternativeName>
</protein>
<organism>
    <name type="scientific">Rhodopseudomonas palustris (strain BisB5)</name>
    <dbReference type="NCBI Taxonomy" id="316057"/>
    <lineage>
        <taxon>Bacteria</taxon>
        <taxon>Pseudomonadati</taxon>
        <taxon>Pseudomonadota</taxon>
        <taxon>Alphaproteobacteria</taxon>
        <taxon>Hyphomicrobiales</taxon>
        <taxon>Nitrobacteraceae</taxon>
        <taxon>Rhodopseudomonas</taxon>
    </lineage>
</organism>